<proteinExistence type="evidence at protein level"/>
<gene>
    <name type="primary">KRTAP21-2</name>
    <name type="synonym">KAP21.2</name>
</gene>
<dbReference type="EMBL" id="AB096959">
    <property type="protein sequence ID" value="BAE46374.1"/>
    <property type="molecule type" value="mRNA"/>
</dbReference>
<dbReference type="EMBL" id="AP000243">
    <property type="status" value="NOT_ANNOTATED_CDS"/>
    <property type="molecule type" value="Genomic_DNA"/>
</dbReference>
<dbReference type="CCDS" id="CCDS13605.1"/>
<dbReference type="RefSeq" id="NP_853648.1">
    <property type="nucleotide sequence ID" value="NM_181617.3"/>
</dbReference>
<dbReference type="BioGRID" id="130661">
    <property type="interactions" value="30"/>
</dbReference>
<dbReference type="FunCoup" id="Q3LI59">
    <property type="interactions" value="8"/>
</dbReference>
<dbReference type="IntAct" id="Q3LI59">
    <property type="interactions" value="28"/>
</dbReference>
<dbReference type="STRING" id="9606.ENSP00000334287"/>
<dbReference type="iPTMnet" id="Q3LI59"/>
<dbReference type="PhosphoSitePlus" id="Q3LI59"/>
<dbReference type="BioMuta" id="KRTAP21-2"/>
<dbReference type="MassIVE" id="Q3LI59"/>
<dbReference type="PaxDb" id="9606-ENSP00000334287"/>
<dbReference type="PeptideAtlas" id="Q3LI59"/>
<dbReference type="DNASU" id="337978"/>
<dbReference type="Ensembl" id="ENST00000333892.3">
    <property type="protein sequence ID" value="ENSP00000334287.2"/>
    <property type="gene ID" value="ENSG00000187026.3"/>
</dbReference>
<dbReference type="GeneID" id="337978"/>
<dbReference type="KEGG" id="hsa:337978"/>
<dbReference type="MANE-Select" id="ENST00000333892.3">
    <property type="protein sequence ID" value="ENSP00000334287.2"/>
    <property type="RefSeq nucleotide sequence ID" value="NM_181617.3"/>
    <property type="RefSeq protein sequence ID" value="NP_853648.1"/>
</dbReference>
<dbReference type="UCSC" id="uc011adh.3">
    <property type="organism name" value="human"/>
</dbReference>
<dbReference type="AGR" id="HGNC:18946"/>
<dbReference type="CTD" id="337978"/>
<dbReference type="GeneCards" id="KRTAP21-2"/>
<dbReference type="HGNC" id="HGNC:18946">
    <property type="gene designation" value="KRTAP21-2"/>
</dbReference>
<dbReference type="HPA" id="ENSG00000187026">
    <property type="expression patterns" value="Group enriched (skin, testis)"/>
</dbReference>
<dbReference type="neXtProt" id="NX_Q3LI59"/>
<dbReference type="PharmGKB" id="PA134884584"/>
<dbReference type="VEuPathDB" id="HostDB:ENSG00000187026"/>
<dbReference type="eggNOG" id="ENOG502S2E1">
    <property type="taxonomic scope" value="Eukaryota"/>
</dbReference>
<dbReference type="GeneTree" id="ENSGT00840000130947"/>
<dbReference type="HOGENOM" id="CLU_140099_1_0_1"/>
<dbReference type="InParanoid" id="Q3LI59"/>
<dbReference type="OMA" id="WSSGCGY"/>
<dbReference type="PAN-GO" id="Q3LI59">
    <property type="GO annotations" value="0 GO annotations based on evolutionary models"/>
</dbReference>
<dbReference type="PathwayCommons" id="Q3LI59"/>
<dbReference type="Reactome" id="R-HSA-6805567">
    <property type="pathway name" value="Keratinization"/>
</dbReference>
<dbReference type="SignaLink" id="Q3LI59"/>
<dbReference type="BioGRID-ORCS" id="337978">
    <property type="hits" value="25 hits in 1105 CRISPR screens"/>
</dbReference>
<dbReference type="GenomeRNAi" id="337978"/>
<dbReference type="Pharos" id="Q3LI59">
    <property type="development level" value="Tdark"/>
</dbReference>
<dbReference type="PRO" id="PR:Q3LI59"/>
<dbReference type="Proteomes" id="UP000005640">
    <property type="component" value="Chromosome 21"/>
</dbReference>
<dbReference type="RNAct" id="Q3LI59">
    <property type="molecule type" value="protein"/>
</dbReference>
<dbReference type="Bgee" id="ENSG00000187026">
    <property type="expression patterns" value="Expressed in primordial germ cell in gonad and 21 other cell types or tissues"/>
</dbReference>
<dbReference type="GO" id="GO:0005829">
    <property type="term" value="C:cytosol"/>
    <property type="evidence" value="ECO:0000304"/>
    <property type="project" value="Reactome"/>
</dbReference>
<dbReference type="GO" id="GO:0005882">
    <property type="term" value="C:intermediate filament"/>
    <property type="evidence" value="ECO:0007669"/>
    <property type="project" value="UniProtKB-KW"/>
</dbReference>
<dbReference type="InterPro" id="IPR021743">
    <property type="entry name" value="KRTAP_type8/19/20/21/22"/>
</dbReference>
<dbReference type="Pfam" id="PF11759">
    <property type="entry name" value="KRTAP"/>
    <property type="match status" value="1"/>
</dbReference>
<accession>Q3LI59</accession>
<reference key="1">
    <citation type="submission" date="2002-11" db="EMBL/GenBank/DDBJ databases">
        <title>Identification of complete keratin-associated protein (KAP) gene cluster spanning 800 kb region on human chromosome 21q22.11.</title>
        <authorList>
            <person name="Obayashi I."/>
            <person name="Shibuya K."/>
            <person name="Minoshima S."/>
            <person name="Kudoh J."/>
            <person name="Shimizu N."/>
        </authorList>
    </citation>
    <scope>NUCLEOTIDE SEQUENCE [MRNA]</scope>
    <source>
        <tissue>Hair root</tissue>
    </source>
</reference>
<reference key="2">
    <citation type="journal article" date="2000" name="Nature">
        <title>The DNA sequence of human chromosome 21.</title>
        <authorList>
            <person name="Hattori M."/>
            <person name="Fujiyama A."/>
            <person name="Taylor T.D."/>
            <person name="Watanabe H."/>
            <person name="Yada T."/>
            <person name="Park H.-S."/>
            <person name="Toyoda A."/>
            <person name="Ishii K."/>
            <person name="Totoki Y."/>
            <person name="Choi D.-K."/>
            <person name="Groner Y."/>
            <person name="Soeda E."/>
            <person name="Ohki M."/>
            <person name="Takagi T."/>
            <person name="Sakaki Y."/>
            <person name="Taudien S."/>
            <person name="Blechschmidt K."/>
            <person name="Polley A."/>
            <person name="Menzel U."/>
            <person name="Delabar J."/>
            <person name="Kumpf K."/>
            <person name="Lehmann R."/>
            <person name="Patterson D."/>
            <person name="Reichwald K."/>
            <person name="Rump A."/>
            <person name="Schillhabel M."/>
            <person name="Schudy A."/>
            <person name="Zimmermann W."/>
            <person name="Rosenthal A."/>
            <person name="Kudoh J."/>
            <person name="Shibuya K."/>
            <person name="Kawasaki K."/>
            <person name="Asakawa S."/>
            <person name="Shintani A."/>
            <person name="Sasaki T."/>
            <person name="Nagamine K."/>
            <person name="Mitsuyama S."/>
            <person name="Antonarakis S.E."/>
            <person name="Minoshima S."/>
            <person name="Shimizu N."/>
            <person name="Nordsiek G."/>
            <person name="Hornischer K."/>
            <person name="Brandt P."/>
            <person name="Scharfe M."/>
            <person name="Schoen O."/>
            <person name="Desario A."/>
            <person name="Reichelt J."/>
            <person name="Kauer G."/>
            <person name="Bloecker H."/>
            <person name="Ramser J."/>
            <person name="Beck A."/>
            <person name="Klages S."/>
            <person name="Hennig S."/>
            <person name="Riesselmann L."/>
            <person name="Dagand E."/>
            <person name="Wehrmeyer S."/>
            <person name="Borzym K."/>
            <person name="Gardiner K."/>
            <person name="Nizetic D."/>
            <person name="Francis F."/>
            <person name="Lehrach H."/>
            <person name="Reinhardt R."/>
            <person name="Yaspo M.-L."/>
        </authorList>
    </citation>
    <scope>NUCLEOTIDE SEQUENCE [LARGE SCALE GENOMIC DNA]</scope>
</reference>
<sequence length="83" mass="8564">MCCNYYRNCCGGCGYGSGWSSGCGYGCGYGCGYGSGCRYGSGYGTGCGYGCGYGSGCGYGCGYSSSCCGYRPLCYRRCYSSCY</sequence>
<evidence type="ECO:0000250" key="1"/>
<evidence type="ECO:0000305" key="2"/>
<feature type="chain" id="PRO_0000223913" description="Keratin-associated protein 21-2">
    <location>
        <begin position="1"/>
        <end position="83"/>
    </location>
</feature>
<feature type="sequence conflict" description="In Ref. 1; BAE46374." evidence="2" ref="1">
    <original>C</original>
    <variation>S</variation>
    <location>
        <position position="9"/>
    </location>
</feature>
<name>KR212_HUMAN</name>
<organism>
    <name type="scientific">Homo sapiens</name>
    <name type="common">Human</name>
    <dbReference type="NCBI Taxonomy" id="9606"/>
    <lineage>
        <taxon>Eukaryota</taxon>
        <taxon>Metazoa</taxon>
        <taxon>Chordata</taxon>
        <taxon>Craniata</taxon>
        <taxon>Vertebrata</taxon>
        <taxon>Euteleostomi</taxon>
        <taxon>Mammalia</taxon>
        <taxon>Eutheria</taxon>
        <taxon>Euarchontoglires</taxon>
        <taxon>Primates</taxon>
        <taxon>Haplorrhini</taxon>
        <taxon>Catarrhini</taxon>
        <taxon>Hominidae</taxon>
        <taxon>Homo</taxon>
    </lineage>
</organism>
<keyword id="KW-0416">Keratin</keyword>
<keyword id="KW-1267">Proteomics identification</keyword>
<keyword id="KW-1185">Reference proteome</keyword>
<keyword id="KW-0677">Repeat</keyword>
<protein>
    <recommendedName>
        <fullName>Keratin-associated protein 21-2</fullName>
    </recommendedName>
</protein>
<comment type="function">
    <text>In the hair cortex, hair keratin intermediate filaments are embedded in an interfilamentous matrix, consisting of hair keratin-associated proteins (KRTAP), which are essential for the formation of a rigid and resistant hair shaft through their extensive disulfide bond cross-linking with abundant cysteine residues of hair keratins. The matrix proteins include the high-sulfur and high-glycine-tyrosine keratins.</text>
</comment>
<comment type="subunit">
    <text evidence="1">Interacts with hair keratins.</text>
</comment>
<comment type="interaction">
    <interactant intactId="EBI-18395721">
        <id>Q3LI59</id>
    </interactant>
    <interactant intactId="EBI-10173507">
        <id>Q6UY14-3</id>
        <label>ADAMTSL4</label>
    </interactant>
    <organismsDiffer>false</organismsDiffer>
    <experiments>3</experiments>
</comment>
<comment type="interaction">
    <interactant intactId="EBI-18395721">
        <id>Q3LI59</id>
    </interactant>
    <interactant intactId="EBI-8624731">
        <id>P0C7T5</id>
        <label>ATXN1L</label>
    </interactant>
    <organismsDiffer>false</organismsDiffer>
    <experiments>3</experiments>
</comment>
<comment type="interaction">
    <interactant intactId="EBI-18395721">
        <id>Q3LI59</id>
    </interactant>
    <interactant intactId="EBI-745073">
        <id>Q9BXY8</id>
        <label>BEX2</label>
    </interactant>
    <organismsDiffer>false</organismsDiffer>
    <experiments>3</experiments>
</comment>
<comment type="interaction">
    <interactant intactId="EBI-18395721">
        <id>Q3LI59</id>
    </interactant>
    <interactant intactId="EBI-11980535">
        <id>P51800-3</id>
        <label>CLCNKA</label>
    </interactant>
    <organismsDiffer>false</organismsDiffer>
    <experiments>3</experiments>
</comment>
<comment type="interaction">
    <interactant intactId="EBI-18395721">
        <id>Q3LI59</id>
    </interactant>
    <interactant intactId="EBI-954466">
        <id>Q96MA1</id>
        <label>DMRTB1</label>
    </interactant>
    <organismsDiffer>false</organismsDiffer>
    <experiments>3</experiments>
</comment>
<comment type="interaction">
    <interactant intactId="EBI-18395721">
        <id>Q3LI59</id>
    </interactant>
    <interactant intactId="EBI-536772">
        <id>Q12805</id>
        <label>EFEMP1</label>
    </interactant>
    <organismsDiffer>false</organismsDiffer>
    <experiments>3</experiments>
</comment>
<comment type="interaction">
    <interactant intactId="EBI-18395721">
        <id>Q3LI59</id>
    </interactant>
    <interactant intactId="EBI-11960181">
        <id>A4D161</id>
        <label>FAM221A</label>
    </interactant>
    <organismsDiffer>false</organismsDiffer>
    <experiments>3</experiments>
</comment>
<comment type="interaction">
    <interactant intactId="EBI-18395721">
        <id>Q3LI59</id>
    </interactant>
    <interactant intactId="EBI-17282008">
        <id>O60548</id>
        <label>FOXD2</label>
    </interactant>
    <organismsDiffer>false</organismsDiffer>
    <experiments>3</experiments>
</comment>
<comment type="interaction">
    <interactant intactId="EBI-18395721">
        <id>Q3LI59</id>
    </interactant>
    <interactant intactId="EBI-2806671">
        <id>P23769</id>
        <label>GATA2</label>
    </interactant>
    <organismsDiffer>false</organismsDiffer>
    <experiments>3</experiments>
</comment>
<comment type="interaction">
    <interactant intactId="EBI-18395721">
        <id>Q3LI59</id>
    </interactant>
    <interactant intactId="EBI-10176379">
        <id>P59991</id>
        <label>KRTAP12-2</label>
    </interactant>
    <organismsDiffer>false</organismsDiffer>
    <experiments>3</experiments>
</comment>
<comment type="interaction">
    <interactant intactId="EBI-18395721">
        <id>Q3LI59</id>
    </interactant>
    <interactant intactId="EBI-3957672">
        <id>Q6PEX3</id>
        <label>KRTAP26-1</label>
    </interactant>
    <organismsDiffer>false</organismsDiffer>
    <experiments>3</experiments>
</comment>
<comment type="interaction">
    <interactant intactId="EBI-18395721">
        <id>Q3LI59</id>
    </interactant>
    <interactant intactId="EBI-11962058">
        <id>Q5T7P2</id>
        <label>LCE1A</label>
    </interactant>
    <organismsDiffer>false</organismsDiffer>
    <experiments>3</experiments>
</comment>
<comment type="interaction">
    <interactant intactId="EBI-18395721">
        <id>Q3LI59</id>
    </interactant>
    <interactant intactId="EBI-10246607">
        <id>Q5TA79</id>
        <label>LCE2A</label>
    </interactant>
    <organismsDiffer>false</organismsDiffer>
    <experiments>3</experiments>
</comment>
<comment type="interaction">
    <interactant intactId="EBI-18395721">
        <id>Q3LI59</id>
    </interactant>
    <interactant intactId="EBI-11955689">
        <id>Q5TCM9</id>
        <label>LCE5A</label>
    </interactant>
    <organismsDiffer>false</organismsDiffer>
    <experiments>3</experiments>
</comment>
<comment type="interaction">
    <interactant intactId="EBI-18395721">
        <id>Q3LI59</id>
    </interactant>
    <interactant intactId="EBI-2340269">
        <id>Q13064</id>
        <label>MKRN3</label>
    </interactant>
    <organismsDiffer>false</organismsDiffer>
    <experiments>3</experiments>
</comment>
<comment type="interaction">
    <interactant intactId="EBI-18395721">
        <id>Q3LI59</id>
    </interactant>
    <interactant intactId="EBI-743459">
        <id>Q9HB63</id>
        <label>NTN4</label>
    </interactant>
    <organismsDiffer>false</organismsDiffer>
    <experiments>3</experiments>
</comment>
<comment type="interaction">
    <interactant intactId="EBI-18395721">
        <id>Q3LI59</id>
    </interactant>
    <interactant intactId="EBI-769257">
        <id>Q9NRQ2</id>
        <label>PLSCR4</label>
    </interactant>
    <organismsDiffer>false</organismsDiffer>
    <experiments>3</experiments>
</comment>
<comment type="interaction">
    <interactant intactId="EBI-18395721">
        <id>Q3LI59</id>
    </interactant>
    <interactant intactId="EBI-17236143">
        <id>Q12837</id>
        <label>POU4F2</label>
    </interactant>
    <organismsDiffer>false</organismsDiffer>
    <experiments>3</experiments>
</comment>
<comment type="interaction">
    <interactant intactId="EBI-18395721">
        <id>Q3LI59</id>
    </interactant>
    <interactant intactId="EBI-740924">
        <id>Q9NZ81</id>
        <label>PRR13</label>
    </interactant>
    <organismsDiffer>false</organismsDiffer>
    <experiments>3</experiments>
</comment>
<comment type="interaction">
    <interactant intactId="EBI-18395721">
        <id>Q3LI59</id>
    </interactant>
    <interactant intactId="EBI-2341200">
        <id>Q9H0F5</id>
        <label>RNF38</label>
    </interactant>
    <organismsDiffer>false</organismsDiffer>
    <experiments>3</experiments>
</comment>
<comment type="interaction">
    <interactant intactId="EBI-18395721">
        <id>Q3LI59</id>
    </interactant>
    <interactant intactId="EBI-2845060">
        <id>Q7L0R7</id>
        <label>RNF44</label>
    </interactant>
    <organismsDiffer>false</organismsDiffer>
    <experiments>3</experiments>
</comment>
<comment type="interaction">
    <interactant intactId="EBI-18395721">
        <id>Q3LI59</id>
    </interactant>
    <interactant intactId="EBI-355653">
        <id>Q92922</id>
        <label>SMARCC1</label>
    </interactant>
    <organismsDiffer>false</organismsDiffer>
    <experiments>3</experiments>
</comment>
<comment type="interaction">
    <interactant intactId="EBI-18395721">
        <id>Q3LI59</id>
    </interactant>
    <interactant intactId="EBI-395421">
        <id>Q16637</id>
        <label>SMN2</label>
    </interactant>
    <organismsDiffer>false</organismsDiffer>
    <experiments>3</experiments>
</comment>
<comment type="interaction">
    <interactant intactId="EBI-18395721">
        <id>Q3LI59</id>
    </interactant>
    <interactant intactId="EBI-766589">
        <id>P09234</id>
        <label>SNRPC</label>
    </interactant>
    <organismsDiffer>false</organismsDiffer>
    <experiments>3</experiments>
</comment>
<comment type="interaction">
    <interactant intactId="EBI-18395721">
        <id>Q3LI59</id>
    </interactant>
    <interactant intactId="EBI-11959123">
        <id>Q99932-2</id>
        <label>SPAG8</label>
    </interactant>
    <organismsDiffer>false</organismsDiffer>
    <experiments>3</experiments>
</comment>
<comment type="interaction">
    <interactant intactId="EBI-18395721">
        <id>Q3LI59</id>
    </interactant>
    <interactant intactId="EBI-11746252">
        <id>Q9NQB0-10</id>
        <label>TCF7L2</label>
    </interactant>
    <organismsDiffer>false</organismsDiffer>
    <experiments>3</experiments>
</comment>
<comment type="interaction">
    <interactant intactId="EBI-18395721">
        <id>Q3LI59</id>
    </interactant>
    <interactant intactId="EBI-10191303">
        <id>O95231</id>
        <label>VENTX</label>
    </interactant>
    <organismsDiffer>false</organismsDiffer>
    <experiments>3</experiments>
</comment>
<comment type="interaction">
    <interactant intactId="EBI-18395721">
        <id>Q3LI59</id>
    </interactant>
    <interactant intactId="EBI-11963196">
        <id>Q15915</id>
        <label>ZIC1</label>
    </interactant>
    <organismsDiffer>false</organismsDiffer>
    <experiments>3</experiments>
</comment>